<proteinExistence type="evidence at protein level"/>
<keyword id="KW-0025">Alternative splicing</keyword>
<keyword id="KW-0597">Phosphoprotein</keyword>
<keyword id="KW-1185">Reference proteome</keyword>
<protein>
    <recommendedName>
        <fullName>Protein FAM219B</fullName>
    </recommendedName>
</protein>
<feature type="chain" id="PRO_0000358919" description="Protein FAM219B">
    <location>
        <begin position="1"/>
        <end position="197"/>
    </location>
</feature>
<feature type="region of interest" description="Disordered" evidence="2">
    <location>
        <begin position="1"/>
        <end position="77"/>
    </location>
</feature>
<feature type="region of interest" description="Disordered" evidence="2">
    <location>
        <begin position="117"/>
        <end position="142"/>
    </location>
</feature>
<feature type="modified residue" description="Phosphoserine" evidence="1">
    <location>
        <position position="14"/>
    </location>
</feature>
<feature type="modified residue" description="Phosphoserine" evidence="5">
    <location>
        <position position="125"/>
    </location>
</feature>
<feature type="modified residue" description="Phosphoserine" evidence="5">
    <location>
        <position position="127"/>
    </location>
</feature>
<feature type="splice variant" id="VSP_036130" description="In isoform 2." evidence="3">
    <original>D</original>
    <variation>R</variation>
    <location>
        <position position="128"/>
    </location>
</feature>
<feature type="splice variant" id="VSP_036131" description="In isoform 2." evidence="3">
    <location>
        <begin position="129"/>
        <end position="197"/>
    </location>
</feature>
<evidence type="ECO:0000250" key="1">
    <source>
        <dbReference type="UniProtKB" id="Q5XKK7"/>
    </source>
</evidence>
<evidence type="ECO:0000256" key="2">
    <source>
        <dbReference type="SAM" id="MobiDB-lite"/>
    </source>
</evidence>
<evidence type="ECO:0000303" key="3">
    <source>
    </source>
</evidence>
<evidence type="ECO:0000305" key="4"/>
<evidence type="ECO:0007744" key="5">
    <source>
    </source>
</evidence>
<gene>
    <name type="primary">Fam219b</name>
</gene>
<accession>Q14DQ1</accession>
<accession>Q8BSZ6</accession>
<dbReference type="EMBL" id="AK028365">
    <property type="protein sequence ID" value="BAC25905.1"/>
    <property type="molecule type" value="mRNA"/>
</dbReference>
<dbReference type="EMBL" id="AC164548">
    <property type="status" value="NOT_ANNOTATED_CDS"/>
    <property type="molecule type" value="Genomic_DNA"/>
</dbReference>
<dbReference type="EMBL" id="CH466522">
    <property type="protein sequence ID" value="EDL25908.1"/>
    <property type="molecule type" value="Genomic_DNA"/>
</dbReference>
<dbReference type="EMBL" id="BC111883">
    <property type="protein sequence ID" value="AAI11884.1"/>
    <property type="molecule type" value="mRNA"/>
</dbReference>
<dbReference type="EMBL" id="BC112403">
    <property type="protein sequence ID" value="AAI12404.1"/>
    <property type="molecule type" value="mRNA"/>
</dbReference>
<dbReference type="CCDS" id="CCDS52807.1">
    <molecule id="Q14DQ1-1"/>
</dbReference>
<dbReference type="CCDS" id="CCDS52808.1">
    <molecule id="Q14DQ1-2"/>
</dbReference>
<dbReference type="RefSeq" id="NP_001159836.1">
    <molecule id="Q14DQ1-1"/>
    <property type="nucleotide sequence ID" value="NM_001166364.1"/>
</dbReference>
<dbReference type="RefSeq" id="NP_780482.1">
    <molecule id="Q14DQ1-2"/>
    <property type="nucleotide sequence ID" value="NM_175273.4"/>
</dbReference>
<dbReference type="BioGRID" id="219327">
    <property type="interactions" value="1"/>
</dbReference>
<dbReference type="FunCoup" id="Q14DQ1">
    <property type="interactions" value="185"/>
</dbReference>
<dbReference type="STRING" id="10090.ENSMUSP00000109838"/>
<dbReference type="iPTMnet" id="Q14DQ1"/>
<dbReference type="PhosphoSitePlus" id="Q14DQ1"/>
<dbReference type="SwissPalm" id="Q14DQ1"/>
<dbReference type="PaxDb" id="10090-ENSMUSP00000109838"/>
<dbReference type="PeptideAtlas" id="Q14DQ1"/>
<dbReference type="ProteomicsDB" id="275515">
    <molecule id="Q14DQ1-1"/>
</dbReference>
<dbReference type="ProteomicsDB" id="275516">
    <molecule id="Q14DQ1-2"/>
</dbReference>
<dbReference type="Pumba" id="Q14DQ1"/>
<dbReference type="Antibodypedia" id="55534">
    <property type="antibodies" value="11 antibodies from 4 providers"/>
</dbReference>
<dbReference type="Ensembl" id="ENSMUST00000093833.6">
    <molecule id="Q14DQ1-2"/>
    <property type="protein sequence ID" value="ENSMUSP00000091353.5"/>
    <property type="gene ID" value="ENSMUSG00000032305.16"/>
</dbReference>
<dbReference type="Ensembl" id="ENSMUST00000114200.10">
    <molecule id="Q14DQ1-1"/>
    <property type="protein sequence ID" value="ENSMUSP00000109838.3"/>
    <property type="gene ID" value="ENSMUSG00000032305.16"/>
</dbReference>
<dbReference type="GeneID" id="78323"/>
<dbReference type="KEGG" id="mmu:78323"/>
<dbReference type="UCSC" id="uc009pva.2">
    <molecule id="Q14DQ1-2"/>
    <property type="organism name" value="mouse"/>
</dbReference>
<dbReference type="UCSC" id="uc009pvb.2">
    <molecule id="Q14DQ1-1"/>
    <property type="organism name" value="mouse"/>
</dbReference>
<dbReference type="AGR" id="MGI:1925573"/>
<dbReference type="CTD" id="57184"/>
<dbReference type="MGI" id="MGI:1925573">
    <property type="gene designation" value="Fam219b"/>
</dbReference>
<dbReference type="VEuPathDB" id="HostDB:ENSMUSG00000032305"/>
<dbReference type="eggNOG" id="ENOG502S0AN">
    <property type="taxonomic scope" value="Eukaryota"/>
</dbReference>
<dbReference type="GeneTree" id="ENSGT00390000000860"/>
<dbReference type="HOGENOM" id="CLU_118636_1_0_1"/>
<dbReference type="InParanoid" id="Q14DQ1"/>
<dbReference type="OMA" id="VMHQPRQ"/>
<dbReference type="OrthoDB" id="9451307at2759"/>
<dbReference type="PhylomeDB" id="Q14DQ1"/>
<dbReference type="TreeFam" id="TF331928"/>
<dbReference type="BioGRID-ORCS" id="78323">
    <property type="hits" value="1 hit in 77 CRISPR screens"/>
</dbReference>
<dbReference type="ChiTaRS" id="Fam219b">
    <property type="organism name" value="mouse"/>
</dbReference>
<dbReference type="PRO" id="PR:Q14DQ1"/>
<dbReference type="Proteomes" id="UP000000589">
    <property type="component" value="Chromosome 9"/>
</dbReference>
<dbReference type="RNAct" id="Q14DQ1">
    <property type="molecule type" value="protein"/>
</dbReference>
<dbReference type="Bgee" id="ENSMUSG00000032305">
    <property type="expression patterns" value="Expressed in humerus cartilage element and 215 other cell types or tissues"/>
</dbReference>
<dbReference type="InterPro" id="IPR029339">
    <property type="entry name" value="FAM219"/>
</dbReference>
<dbReference type="PANTHER" id="PTHR31281">
    <property type="entry name" value="PROTEIN FAM219A"/>
    <property type="match status" value="1"/>
</dbReference>
<dbReference type="PANTHER" id="PTHR31281:SF2">
    <property type="entry name" value="PROTEIN FAM219B"/>
    <property type="match status" value="1"/>
</dbReference>
<dbReference type="Pfam" id="PF15260">
    <property type="entry name" value="FAM219A"/>
    <property type="match status" value="1"/>
</dbReference>
<reference key="1">
    <citation type="journal article" date="2005" name="Science">
        <title>The transcriptional landscape of the mammalian genome.</title>
        <authorList>
            <person name="Carninci P."/>
            <person name="Kasukawa T."/>
            <person name="Katayama S."/>
            <person name="Gough J."/>
            <person name="Frith M.C."/>
            <person name="Maeda N."/>
            <person name="Oyama R."/>
            <person name="Ravasi T."/>
            <person name="Lenhard B."/>
            <person name="Wells C."/>
            <person name="Kodzius R."/>
            <person name="Shimokawa K."/>
            <person name="Bajic V.B."/>
            <person name="Brenner S.E."/>
            <person name="Batalov S."/>
            <person name="Forrest A.R."/>
            <person name="Zavolan M."/>
            <person name="Davis M.J."/>
            <person name="Wilming L.G."/>
            <person name="Aidinis V."/>
            <person name="Allen J.E."/>
            <person name="Ambesi-Impiombato A."/>
            <person name="Apweiler R."/>
            <person name="Aturaliya R.N."/>
            <person name="Bailey T.L."/>
            <person name="Bansal M."/>
            <person name="Baxter L."/>
            <person name="Beisel K.W."/>
            <person name="Bersano T."/>
            <person name="Bono H."/>
            <person name="Chalk A.M."/>
            <person name="Chiu K.P."/>
            <person name="Choudhary V."/>
            <person name="Christoffels A."/>
            <person name="Clutterbuck D.R."/>
            <person name="Crowe M.L."/>
            <person name="Dalla E."/>
            <person name="Dalrymple B.P."/>
            <person name="de Bono B."/>
            <person name="Della Gatta G."/>
            <person name="di Bernardo D."/>
            <person name="Down T."/>
            <person name="Engstrom P."/>
            <person name="Fagiolini M."/>
            <person name="Faulkner G."/>
            <person name="Fletcher C.F."/>
            <person name="Fukushima T."/>
            <person name="Furuno M."/>
            <person name="Futaki S."/>
            <person name="Gariboldi M."/>
            <person name="Georgii-Hemming P."/>
            <person name="Gingeras T.R."/>
            <person name="Gojobori T."/>
            <person name="Green R.E."/>
            <person name="Gustincich S."/>
            <person name="Harbers M."/>
            <person name="Hayashi Y."/>
            <person name="Hensch T.K."/>
            <person name="Hirokawa N."/>
            <person name="Hill D."/>
            <person name="Huminiecki L."/>
            <person name="Iacono M."/>
            <person name="Ikeo K."/>
            <person name="Iwama A."/>
            <person name="Ishikawa T."/>
            <person name="Jakt M."/>
            <person name="Kanapin A."/>
            <person name="Katoh M."/>
            <person name="Kawasawa Y."/>
            <person name="Kelso J."/>
            <person name="Kitamura H."/>
            <person name="Kitano H."/>
            <person name="Kollias G."/>
            <person name="Krishnan S.P."/>
            <person name="Kruger A."/>
            <person name="Kummerfeld S.K."/>
            <person name="Kurochkin I.V."/>
            <person name="Lareau L.F."/>
            <person name="Lazarevic D."/>
            <person name="Lipovich L."/>
            <person name="Liu J."/>
            <person name="Liuni S."/>
            <person name="McWilliam S."/>
            <person name="Madan Babu M."/>
            <person name="Madera M."/>
            <person name="Marchionni L."/>
            <person name="Matsuda H."/>
            <person name="Matsuzawa S."/>
            <person name="Miki H."/>
            <person name="Mignone F."/>
            <person name="Miyake S."/>
            <person name="Morris K."/>
            <person name="Mottagui-Tabar S."/>
            <person name="Mulder N."/>
            <person name="Nakano N."/>
            <person name="Nakauchi H."/>
            <person name="Ng P."/>
            <person name="Nilsson R."/>
            <person name="Nishiguchi S."/>
            <person name="Nishikawa S."/>
            <person name="Nori F."/>
            <person name="Ohara O."/>
            <person name="Okazaki Y."/>
            <person name="Orlando V."/>
            <person name="Pang K.C."/>
            <person name="Pavan W.J."/>
            <person name="Pavesi G."/>
            <person name="Pesole G."/>
            <person name="Petrovsky N."/>
            <person name="Piazza S."/>
            <person name="Reed J."/>
            <person name="Reid J.F."/>
            <person name="Ring B.Z."/>
            <person name="Ringwald M."/>
            <person name="Rost B."/>
            <person name="Ruan Y."/>
            <person name="Salzberg S.L."/>
            <person name="Sandelin A."/>
            <person name="Schneider C."/>
            <person name="Schoenbach C."/>
            <person name="Sekiguchi K."/>
            <person name="Semple C.A."/>
            <person name="Seno S."/>
            <person name="Sessa L."/>
            <person name="Sheng Y."/>
            <person name="Shibata Y."/>
            <person name="Shimada H."/>
            <person name="Shimada K."/>
            <person name="Silva D."/>
            <person name="Sinclair B."/>
            <person name="Sperling S."/>
            <person name="Stupka E."/>
            <person name="Sugiura K."/>
            <person name="Sultana R."/>
            <person name="Takenaka Y."/>
            <person name="Taki K."/>
            <person name="Tammoja K."/>
            <person name="Tan S.L."/>
            <person name="Tang S."/>
            <person name="Taylor M.S."/>
            <person name="Tegner J."/>
            <person name="Teichmann S.A."/>
            <person name="Ueda H.R."/>
            <person name="van Nimwegen E."/>
            <person name="Verardo R."/>
            <person name="Wei C.L."/>
            <person name="Yagi K."/>
            <person name="Yamanishi H."/>
            <person name="Zabarovsky E."/>
            <person name="Zhu S."/>
            <person name="Zimmer A."/>
            <person name="Hide W."/>
            <person name="Bult C."/>
            <person name="Grimmond S.M."/>
            <person name="Teasdale R.D."/>
            <person name="Liu E.T."/>
            <person name="Brusic V."/>
            <person name="Quackenbush J."/>
            <person name="Wahlestedt C."/>
            <person name="Mattick J.S."/>
            <person name="Hume D.A."/>
            <person name="Kai C."/>
            <person name="Sasaki D."/>
            <person name="Tomaru Y."/>
            <person name="Fukuda S."/>
            <person name="Kanamori-Katayama M."/>
            <person name="Suzuki M."/>
            <person name="Aoki J."/>
            <person name="Arakawa T."/>
            <person name="Iida J."/>
            <person name="Imamura K."/>
            <person name="Itoh M."/>
            <person name="Kato T."/>
            <person name="Kawaji H."/>
            <person name="Kawagashira N."/>
            <person name="Kawashima T."/>
            <person name="Kojima M."/>
            <person name="Kondo S."/>
            <person name="Konno H."/>
            <person name="Nakano K."/>
            <person name="Ninomiya N."/>
            <person name="Nishio T."/>
            <person name="Okada M."/>
            <person name="Plessy C."/>
            <person name="Shibata K."/>
            <person name="Shiraki T."/>
            <person name="Suzuki S."/>
            <person name="Tagami M."/>
            <person name="Waki K."/>
            <person name="Watahiki A."/>
            <person name="Okamura-Oho Y."/>
            <person name="Suzuki H."/>
            <person name="Kawai J."/>
            <person name="Hayashizaki Y."/>
        </authorList>
    </citation>
    <scope>NUCLEOTIDE SEQUENCE [LARGE SCALE MRNA] (ISOFORM 2)</scope>
    <source>
        <strain>C57BL/6J</strain>
    </source>
</reference>
<reference key="2">
    <citation type="journal article" date="2009" name="PLoS Biol.">
        <title>Lineage-specific biology revealed by a finished genome assembly of the mouse.</title>
        <authorList>
            <person name="Church D.M."/>
            <person name="Goodstadt L."/>
            <person name="Hillier L.W."/>
            <person name="Zody M.C."/>
            <person name="Goldstein S."/>
            <person name="She X."/>
            <person name="Bult C.J."/>
            <person name="Agarwala R."/>
            <person name="Cherry J.L."/>
            <person name="DiCuccio M."/>
            <person name="Hlavina W."/>
            <person name="Kapustin Y."/>
            <person name="Meric P."/>
            <person name="Maglott D."/>
            <person name="Birtle Z."/>
            <person name="Marques A.C."/>
            <person name="Graves T."/>
            <person name="Zhou S."/>
            <person name="Teague B."/>
            <person name="Potamousis K."/>
            <person name="Churas C."/>
            <person name="Place M."/>
            <person name="Herschleb J."/>
            <person name="Runnheim R."/>
            <person name="Forrest D."/>
            <person name="Amos-Landgraf J."/>
            <person name="Schwartz D.C."/>
            <person name="Cheng Z."/>
            <person name="Lindblad-Toh K."/>
            <person name="Eichler E.E."/>
            <person name="Ponting C.P."/>
        </authorList>
    </citation>
    <scope>NUCLEOTIDE SEQUENCE [LARGE SCALE GENOMIC DNA]</scope>
    <source>
        <strain>C57BL/6J</strain>
    </source>
</reference>
<reference key="3">
    <citation type="submission" date="2005-07" db="EMBL/GenBank/DDBJ databases">
        <authorList>
            <person name="Mural R.J."/>
            <person name="Adams M.D."/>
            <person name="Myers E.W."/>
            <person name="Smith H.O."/>
            <person name="Venter J.C."/>
        </authorList>
    </citation>
    <scope>NUCLEOTIDE SEQUENCE [LARGE SCALE GENOMIC DNA]</scope>
</reference>
<reference key="4">
    <citation type="journal article" date="2004" name="Genome Res.">
        <title>The status, quality, and expansion of the NIH full-length cDNA project: the Mammalian Gene Collection (MGC).</title>
        <authorList>
            <consortium name="The MGC Project Team"/>
        </authorList>
    </citation>
    <scope>NUCLEOTIDE SEQUENCE [LARGE SCALE MRNA] (ISOFORM 1)</scope>
</reference>
<reference key="5">
    <citation type="journal article" date="2010" name="Cell">
        <title>A tissue-specific atlas of mouse protein phosphorylation and expression.</title>
        <authorList>
            <person name="Huttlin E.L."/>
            <person name="Jedrychowski M.P."/>
            <person name="Elias J.E."/>
            <person name="Goswami T."/>
            <person name="Rad R."/>
            <person name="Beausoleil S.A."/>
            <person name="Villen J."/>
            <person name="Haas W."/>
            <person name="Sowa M.E."/>
            <person name="Gygi S.P."/>
        </authorList>
    </citation>
    <scope>PHOSPHORYLATION [LARGE SCALE ANALYSIS] AT SER-125 AND SER-127</scope>
    <scope>IDENTIFICATION BY MASS SPECTROMETRY [LARGE SCALE ANALYSIS]</scope>
    <source>
        <tissue>Liver</tissue>
        <tissue>Lung</tissue>
        <tissue>Pancreas</tissue>
        <tissue>Spleen</tissue>
        <tissue>Testis</tissue>
    </source>
</reference>
<sequence>MATEEFRGHAVRMSTQGSQPGAAPDSVAGTAGLPSGQSGGAGLRLGERPPPAMEKRGPYLVTRAPSIQAKLKKHRDHAKAVLRRKGMLGALTNRPDSSGKRSVKFNKGYTALSQSPDENLVSLDSDSDGELESRYSSGYSSAEQVNQDVSRQLLQDGYHLDEIPDDEDLDLIPPKPIASSACSCCWCCLGDSSCTLQ</sequence>
<comment type="alternative products">
    <event type="alternative splicing"/>
    <isoform>
        <id>Q14DQ1-1</id>
        <name>1</name>
        <sequence type="displayed"/>
    </isoform>
    <isoform>
        <id>Q14DQ1-2</id>
        <name>2</name>
        <sequence type="described" ref="VSP_036130 VSP_036131"/>
    </isoform>
</comment>
<comment type="similarity">
    <text evidence="4">Belongs to the FAM219 family.</text>
</comment>
<organism>
    <name type="scientific">Mus musculus</name>
    <name type="common">Mouse</name>
    <dbReference type="NCBI Taxonomy" id="10090"/>
    <lineage>
        <taxon>Eukaryota</taxon>
        <taxon>Metazoa</taxon>
        <taxon>Chordata</taxon>
        <taxon>Craniata</taxon>
        <taxon>Vertebrata</taxon>
        <taxon>Euteleostomi</taxon>
        <taxon>Mammalia</taxon>
        <taxon>Eutheria</taxon>
        <taxon>Euarchontoglires</taxon>
        <taxon>Glires</taxon>
        <taxon>Rodentia</taxon>
        <taxon>Myomorpha</taxon>
        <taxon>Muroidea</taxon>
        <taxon>Muridae</taxon>
        <taxon>Murinae</taxon>
        <taxon>Mus</taxon>
        <taxon>Mus</taxon>
    </lineage>
</organism>
<name>F219B_MOUSE</name>